<name>RS16_BRUAB</name>
<sequence length="134" mass="14546">MALKIRLARAGSKKRPYYHVVVADVRAPRDGRFIETVGSWNPVLPKDAERVKLDAERIQHWIAQGAQPTDRVLRFLDQAGIAKRPSRNNPTKGEPGKKAQERLALAKQAEEEASAKAAEAAAAAAAPAEEAASE</sequence>
<protein>
    <recommendedName>
        <fullName evidence="1">Small ribosomal subunit protein bS16</fullName>
    </recommendedName>
    <alternativeName>
        <fullName evidence="3">30S ribosomal protein S16</fullName>
    </alternativeName>
</protein>
<reference key="1">
    <citation type="journal article" date="2005" name="J. Bacteriol.">
        <title>Completion of the genome sequence of Brucella abortus and comparison to the highly similar genomes of Brucella melitensis and Brucella suis.</title>
        <authorList>
            <person name="Halling S.M."/>
            <person name="Peterson-Burch B.D."/>
            <person name="Bricker B.J."/>
            <person name="Zuerner R.L."/>
            <person name="Qing Z."/>
            <person name="Li L.-L."/>
            <person name="Kapur V."/>
            <person name="Alt D.P."/>
            <person name="Olsen S.C."/>
        </authorList>
    </citation>
    <scope>NUCLEOTIDE SEQUENCE [LARGE SCALE GENOMIC DNA]</scope>
    <source>
        <strain>9-941</strain>
    </source>
</reference>
<gene>
    <name evidence="1" type="primary">rpsP</name>
    <name type="ordered locus">BruAb1_1803</name>
</gene>
<accession>Q57B65</accession>
<proteinExistence type="inferred from homology"/>
<feature type="chain" id="PRO_0000243783" description="Small ribosomal subunit protein bS16">
    <location>
        <begin position="1"/>
        <end position="134"/>
    </location>
</feature>
<feature type="region of interest" description="Disordered" evidence="2">
    <location>
        <begin position="79"/>
        <end position="134"/>
    </location>
</feature>
<feature type="compositionally biased region" description="Low complexity" evidence="2">
    <location>
        <begin position="115"/>
        <end position="134"/>
    </location>
</feature>
<evidence type="ECO:0000255" key="1">
    <source>
        <dbReference type="HAMAP-Rule" id="MF_00385"/>
    </source>
</evidence>
<evidence type="ECO:0000256" key="2">
    <source>
        <dbReference type="SAM" id="MobiDB-lite"/>
    </source>
</evidence>
<evidence type="ECO:0000305" key="3"/>
<organism>
    <name type="scientific">Brucella abortus biovar 1 (strain 9-941)</name>
    <dbReference type="NCBI Taxonomy" id="262698"/>
    <lineage>
        <taxon>Bacteria</taxon>
        <taxon>Pseudomonadati</taxon>
        <taxon>Pseudomonadota</taxon>
        <taxon>Alphaproteobacteria</taxon>
        <taxon>Hyphomicrobiales</taxon>
        <taxon>Brucellaceae</taxon>
        <taxon>Brucella/Ochrobactrum group</taxon>
        <taxon>Brucella</taxon>
    </lineage>
</organism>
<keyword id="KW-0687">Ribonucleoprotein</keyword>
<keyword id="KW-0689">Ribosomal protein</keyword>
<comment type="similarity">
    <text evidence="1">Belongs to the bacterial ribosomal protein bS16 family.</text>
</comment>
<dbReference type="EMBL" id="AE017223">
    <property type="protein sequence ID" value="AAX75119.1"/>
    <property type="molecule type" value="Genomic_DNA"/>
</dbReference>
<dbReference type="RefSeq" id="WP_002964901.1">
    <property type="nucleotide sequence ID" value="NC_006932.1"/>
</dbReference>
<dbReference type="SMR" id="Q57B65"/>
<dbReference type="EnsemblBacteria" id="AAX75119">
    <property type="protein sequence ID" value="AAX75119"/>
    <property type="gene ID" value="BruAb1_1803"/>
</dbReference>
<dbReference type="GeneID" id="93017838"/>
<dbReference type="KEGG" id="bmb:BruAb1_1803"/>
<dbReference type="HOGENOM" id="CLU_100590_3_1_5"/>
<dbReference type="Proteomes" id="UP000000540">
    <property type="component" value="Chromosome I"/>
</dbReference>
<dbReference type="GO" id="GO:0005737">
    <property type="term" value="C:cytoplasm"/>
    <property type="evidence" value="ECO:0007669"/>
    <property type="project" value="UniProtKB-ARBA"/>
</dbReference>
<dbReference type="GO" id="GO:0015935">
    <property type="term" value="C:small ribosomal subunit"/>
    <property type="evidence" value="ECO:0007669"/>
    <property type="project" value="TreeGrafter"/>
</dbReference>
<dbReference type="GO" id="GO:0003735">
    <property type="term" value="F:structural constituent of ribosome"/>
    <property type="evidence" value="ECO:0007669"/>
    <property type="project" value="InterPro"/>
</dbReference>
<dbReference type="GO" id="GO:0006412">
    <property type="term" value="P:translation"/>
    <property type="evidence" value="ECO:0007669"/>
    <property type="project" value="UniProtKB-UniRule"/>
</dbReference>
<dbReference type="Gene3D" id="3.30.1320.10">
    <property type="match status" value="1"/>
</dbReference>
<dbReference type="HAMAP" id="MF_00385">
    <property type="entry name" value="Ribosomal_bS16"/>
    <property type="match status" value="1"/>
</dbReference>
<dbReference type="InterPro" id="IPR000307">
    <property type="entry name" value="Ribosomal_bS16"/>
</dbReference>
<dbReference type="InterPro" id="IPR023803">
    <property type="entry name" value="Ribosomal_bS16_dom_sf"/>
</dbReference>
<dbReference type="NCBIfam" id="TIGR00002">
    <property type="entry name" value="S16"/>
    <property type="match status" value="1"/>
</dbReference>
<dbReference type="PANTHER" id="PTHR12919">
    <property type="entry name" value="30S RIBOSOMAL PROTEIN S16"/>
    <property type="match status" value="1"/>
</dbReference>
<dbReference type="PANTHER" id="PTHR12919:SF20">
    <property type="entry name" value="SMALL RIBOSOMAL SUBUNIT PROTEIN BS16M"/>
    <property type="match status" value="1"/>
</dbReference>
<dbReference type="Pfam" id="PF00886">
    <property type="entry name" value="Ribosomal_S16"/>
    <property type="match status" value="1"/>
</dbReference>
<dbReference type="SUPFAM" id="SSF54565">
    <property type="entry name" value="Ribosomal protein S16"/>
    <property type="match status" value="1"/>
</dbReference>